<feature type="chain" id="PRO_1000099285" description="Polyamine aminopropyltransferase">
    <location>
        <begin position="1"/>
        <end position="262"/>
    </location>
</feature>
<feature type="domain" description="PABS" evidence="1">
    <location>
        <begin position="1"/>
        <end position="249"/>
    </location>
</feature>
<feature type="active site" description="Proton acceptor" evidence="1">
    <location>
        <position position="155"/>
    </location>
</feature>
<feature type="binding site" evidence="1">
    <location>
        <position position="29"/>
    </location>
    <ligand>
        <name>S-methyl-5'-thioadenosine</name>
        <dbReference type="ChEBI" id="CHEBI:17509"/>
    </ligand>
</feature>
<feature type="binding site" evidence="1">
    <location>
        <position position="83"/>
    </location>
    <ligand>
        <name>spermidine</name>
        <dbReference type="ChEBI" id="CHEBI:57834"/>
    </ligand>
</feature>
<reference key="1">
    <citation type="submission" date="2008-10" db="EMBL/GenBank/DDBJ databases">
        <title>The complete genome sequence of Helicobacter pylori strain P12.</title>
        <authorList>
            <person name="Fischer W."/>
            <person name="Windhager L."/>
            <person name="Karnholz A."/>
            <person name="Zeiller M."/>
            <person name="Zimmer R."/>
            <person name="Haas R."/>
        </authorList>
    </citation>
    <scope>NUCLEOTIDE SEQUENCE [LARGE SCALE GENOMIC DNA]</scope>
    <source>
        <strain>P12</strain>
    </source>
</reference>
<name>SPEE_HELP2</name>
<organism>
    <name type="scientific">Helicobacter pylori (strain P12)</name>
    <dbReference type="NCBI Taxonomy" id="570508"/>
    <lineage>
        <taxon>Bacteria</taxon>
        <taxon>Pseudomonadati</taxon>
        <taxon>Campylobacterota</taxon>
        <taxon>Epsilonproteobacteria</taxon>
        <taxon>Campylobacterales</taxon>
        <taxon>Helicobacteraceae</taxon>
        <taxon>Helicobacter</taxon>
    </lineage>
</organism>
<evidence type="ECO:0000255" key="1">
    <source>
        <dbReference type="HAMAP-Rule" id="MF_00198"/>
    </source>
</evidence>
<keyword id="KW-0963">Cytoplasm</keyword>
<keyword id="KW-0620">Polyamine biosynthesis</keyword>
<keyword id="KW-0745">Spermidine biosynthesis</keyword>
<keyword id="KW-0808">Transferase</keyword>
<protein>
    <recommendedName>
        <fullName evidence="1">Polyamine aminopropyltransferase</fullName>
    </recommendedName>
    <alternativeName>
        <fullName evidence="1">Putrescine aminopropyltransferase</fullName>
        <shortName evidence="1">PAPT</shortName>
    </alternativeName>
    <alternativeName>
        <fullName evidence="1">Spermidine synthase</fullName>
        <shortName evidence="1">SPDS</shortName>
        <shortName evidence="1">SPDSY</shortName>
        <ecNumber evidence="1">2.5.1.16</ecNumber>
    </alternativeName>
</protein>
<proteinExistence type="inferred from homology"/>
<dbReference type="EC" id="2.5.1.16" evidence="1"/>
<dbReference type="EMBL" id="CP001217">
    <property type="protein sequence ID" value="ACJ07991.1"/>
    <property type="molecule type" value="Genomic_DNA"/>
</dbReference>
<dbReference type="SMR" id="B6JM63"/>
<dbReference type="KEGG" id="hpp:HPP12_0839"/>
<dbReference type="HOGENOM" id="CLU_048199_0_0_7"/>
<dbReference type="UniPathway" id="UPA00248">
    <property type="reaction ID" value="UER00314"/>
</dbReference>
<dbReference type="Proteomes" id="UP000008198">
    <property type="component" value="Chromosome"/>
</dbReference>
<dbReference type="GO" id="GO:0005829">
    <property type="term" value="C:cytosol"/>
    <property type="evidence" value="ECO:0007669"/>
    <property type="project" value="TreeGrafter"/>
</dbReference>
<dbReference type="GO" id="GO:0004766">
    <property type="term" value="F:spermidine synthase activity"/>
    <property type="evidence" value="ECO:0007669"/>
    <property type="project" value="UniProtKB-UniRule"/>
</dbReference>
<dbReference type="GO" id="GO:0008295">
    <property type="term" value="P:spermidine biosynthetic process"/>
    <property type="evidence" value="ECO:0007669"/>
    <property type="project" value="UniProtKB-UniRule"/>
</dbReference>
<dbReference type="FunFam" id="3.40.50.150:FF:000466">
    <property type="entry name" value="Polyamine aminopropyltransferase"/>
    <property type="match status" value="1"/>
</dbReference>
<dbReference type="Gene3D" id="2.30.140.10">
    <property type="entry name" value="Spermidine synthase, tetramerisation domain"/>
    <property type="match status" value="1"/>
</dbReference>
<dbReference type="Gene3D" id="3.40.50.150">
    <property type="entry name" value="Vaccinia Virus protein VP39"/>
    <property type="match status" value="1"/>
</dbReference>
<dbReference type="HAMAP" id="MF_00198">
    <property type="entry name" value="Spermidine_synth"/>
    <property type="match status" value="1"/>
</dbReference>
<dbReference type="InterPro" id="IPR030374">
    <property type="entry name" value="PABS"/>
</dbReference>
<dbReference type="InterPro" id="IPR029063">
    <property type="entry name" value="SAM-dependent_MTases_sf"/>
</dbReference>
<dbReference type="InterPro" id="IPR001045">
    <property type="entry name" value="Spermi_synthase"/>
</dbReference>
<dbReference type="InterPro" id="IPR035246">
    <property type="entry name" value="Spermidine_synt_N"/>
</dbReference>
<dbReference type="InterPro" id="IPR037163">
    <property type="entry name" value="Spermidine_synt_N_sf"/>
</dbReference>
<dbReference type="NCBIfam" id="NF001811">
    <property type="entry name" value="PRK00536.1"/>
    <property type="match status" value="1"/>
</dbReference>
<dbReference type="PANTHER" id="PTHR11558:SF11">
    <property type="entry name" value="SPERMIDINE SYNTHASE"/>
    <property type="match status" value="1"/>
</dbReference>
<dbReference type="PANTHER" id="PTHR11558">
    <property type="entry name" value="SPERMIDINE/SPERMINE SYNTHASE"/>
    <property type="match status" value="1"/>
</dbReference>
<dbReference type="Pfam" id="PF17284">
    <property type="entry name" value="Spermine_synt_N"/>
    <property type="match status" value="1"/>
</dbReference>
<dbReference type="Pfam" id="PF01564">
    <property type="entry name" value="Spermine_synth"/>
    <property type="match status" value="1"/>
</dbReference>
<dbReference type="SUPFAM" id="SSF53335">
    <property type="entry name" value="S-adenosyl-L-methionine-dependent methyltransferases"/>
    <property type="match status" value="1"/>
</dbReference>
<dbReference type="PROSITE" id="PS51006">
    <property type="entry name" value="PABS_2"/>
    <property type="match status" value="1"/>
</dbReference>
<comment type="function">
    <text evidence="1">Catalyzes the irreversible transfer of a propylamine group from the amino donor S-adenosylmethioninamine (decarboxy-AdoMet) to putrescine (1,4-diaminobutane) to yield spermidine.</text>
</comment>
<comment type="catalytic activity">
    <reaction evidence="1">
        <text>S-adenosyl 3-(methylsulfanyl)propylamine + putrescine = S-methyl-5'-thioadenosine + spermidine + H(+)</text>
        <dbReference type="Rhea" id="RHEA:12721"/>
        <dbReference type="ChEBI" id="CHEBI:15378"/>
        <dbReference type="ChEBI" id="CHEBI:17509"/>
        <dbReference type="ChEBI" id="CHEBI:57443"/>
        <dbReference type="ChEBI" id="CHEBI:57834"/>
        <dbReference type="ChEBI" id="CHEBI:326268"/>
        <dbReference type="EC" id="2.5.1.16"/>
    </reaction>
</comment>
<comment type="pathway">
    <text evidence="1">Amine and polyamine biosynthesis; spermidine biosynthesis; spermidine from putrescine: step 1/1.</text>
</comment>
<comment type="subunit">
    <text evidence="1">Homodimer or homotetramer.</text>
</comment>
<comment type="subcellular location">
    <subcellularLocation>
        <location evidence="1">Cytoplasm</location>
    </subcellularLocation>
</comment>
<comment type="similarity">
    <text evidence="1">Belongs to the spermidine/spermine synthase family.</text>
</comment>
<sequence>MWITQEITPYLRKEYTIEAKLLDVRSEHNILEIFKSKDFGEIAMLNCQLLFKNFLHIESELLAHMGGCTKKELKEVLIVDGFDLELAHQLFKYDTRIDFVQADEKILDSFISFFPHFHEVKNNKNFTHAKQLLDLDIKKYDLILCLQEPDIHKIDGLKRMLKEDGVFISVAKHPLLEHVSMQNALKNLGDFFPITIPFVAPLRILSNKGYIYASFKTHPLKDLMTPKIEALKSVRYYNEDIHRAAFALPKNLQEVFKDNIKS</sequence>
<gene>
    <name evidence="1" type="primary">speE</name>
    <name type="ordered locus">HPP12_0839</name>
</gene>
<accession>B6JM63</accession>